<sequence>MQVSNVNDVKIYNLSCGKSLPEWLSDRKKRALQKKDVDVRRRIELIQDFEMPTVSTNIKVSRDGQYIMAAGTYKPRVRCYDTYQLSLKFERCLDAEVVKFDILSEDYSKIVFLQSDRYVELHSQHGRYYRLRIPKFGRDFAYHYPSCDLYFVGASSEVYRLNLEQGRYLNSLQTDASQINVCDINPAHHLFAAGTTEGKVECWDPRTRNRVGLLDCALSSVTADMEVEGLPSVSALKFHGPLHMAVGTSTGQVVLYDLRSNRPLIAKDHQYGLPIKSIQFHSALDLVISADSRIIKMWNKDNGKIFTSIEPEADVNDVCLYPNSGMLFTANEAPKMNVYYIPALGPAPRWCSFLDNLTEELEENPESTVYDDYKFVTRKELDELGLSHLIGSPLLRAYMHGFFMDIRLYHKVKAMVNPFAYEEYKKEKIRQKIEEARAQRVQIKKLPKVNKELALKLYEEEEELSQKKKKQKKMPNILSDDRFKVMFENPDFQVDQESEEYRLLNPLVSKISEKRKKKLKILEKLDAEDGEEEEEPEGKPSDAESSESSDDEKGWVEEVRKQRKLLRQEEKQRRQERVREDQQTALKPQFYEIKAGEEFRSFQDAAKKQKLMRKTLEDRVKVEEKLGTLNVSDTAVGSKQLTFTLKKFEQHRKRQEAEKQHQEERKKLRRSAGHLKSKPARGRPFH</sequence>
<keyword id="KW-0175">Coiled coil</keyword>
<keyword id="KW-0539">Nucleus</keyword>
<keyword id="KW-1185">Reference proteome</keyword>
<keyword id="KW-0677">Repeat</keyword>
<keyword id="KW-0853">WD repeat</keyword>
<evidence type="ECO:0000250" key="1"/>
<evidence type="ECO:0000255" key="2"/>
<evidence type="ECO:0000256" key="3">
    <source>
        <dbReference type="SAM" id="MobiDB-lite"/>
    </source>
</evidence>
<evidence type="ECO:0000305" key="4"/>
<comment type="subcellular location">
    <subcellularLocation>
        <location evidence="1">Nucleus</location>
        <location evidence="1">Nucleolus</location>
    </subcellularLocation>
</comment>
<comment type="similarity">
    <text evidence="4">Belongs to the WD repeat NOL10/ENP2 family.</text>
</comment>
<gene>
    <name type="primary">nol10</name>
</gene>
<dbReference type="EMBL" id="BC067979">
    <property type="protein sequence ID" value="AAH67979.1"/>
    <property type="molecule type" value="mRNA"/>
</dbReference>
<dbReference type="RefSeq" id="NP_998842.1">
    <property type="nucleotide sequence ID" value="NM_213677.1"/>
</dbReference>
<dbReference type="SMR" id="Q6NVM6"/>
<dbReference type="FunCoup" id="Q6NVM6">
    <property type="interactions" value="2861"/>
</dbReference>
<dbReference type="STRING" id="8364.ENSXETP00000043203"/>
<dbReference type="PaxDb" id="8364-ENSXETP00000007599"/>
<dbReference type="DNASU" id="407887"/>
<dbReference type="GeneID" id="407887"/>
<dbReference type="KEGG" id="xtr:407887"/>
<dbReference type="AGR" id="Xenbase:XB-GENE-5799993"/>
<dbReference type="CTD" id="79954"/>
<dbReference type="Xenbase" id="XB-GENE-5799993">
    <property type="gene designation" value="nol10"/>
</dbReference>
<dbReference type="eggNOG" id="KOG2321">
    <property type="taxonomic scope" value="Eukaryota"/>
</dbReference>
<dbReference type="InParanoid" id="Q6NVM6"/>
<dbReference type="OMA" id="GYFMDVR"/>
<dbReference type="OrthoDB" id="273340at2759"/>
<dbReference type="Proteomes" id="UP000008143">
    <property type="component" value="Chromosome 5"/>
</dbReference>
<dbReference type="GO" id="GO:0005730">
    <property type="term" value="C:nucleolus"/>
    <property type="evidence" value="ECO:0007669"/>
    <property type="project" value="UniProtKB-SubCell"/>
</dbReference>
<dbReference type="FunFam" id="2.130.10.10:FF:000601">
    <property type="entry name" value="Nucleolar protein 10"/>
    <property type="match status" value="1"/>
</dbReference>
<dbReference type="FunFam" id="2.130.10.10:FF:000980">
    <property type="entry name" value="Nucleolar protein 10"/>
    <property type="match status" value="1"/>
</dbReference>
<dbReference type="Gene3D" id="2.130.10.10">
    <property type="entry name" value="YVTN repeat-like/Quinoprotein amine dehydrogenase"/>
    <property type="match status" value="2"/>
</dbReference>
<dbReference type="InterPro" id="IPR056551">
    <property type="entry name" value="Beta-prop_NOL10_N"/>
</dbReference>
<dbReference type="InterPro" id="IPR040382">
    <property type="entry name" value="NOL10/Enp2"/>
</dbReference>
<dbReference type="InterPro" id="IPR056550">
    <property type="entry name" value="NOL10_2nd"/>
</dbReference>
<dbReference type="InterPro" id="IPR012580">
    <property type="entry name" value="NUC153"/>
</dbReference>
<dbReference type="InterPro" id="IPR015943">
    <property type="entry name" value="WD40/YVTN_repeat-like_dom_sf"/>
</dbReference>
<dbReference type="InterPro" id="IPR036322">
    <property type="entry name" value="WD40_repeat_dom_sf"/>
</dbReference>
<dbReference type="InterPro" id="IPR001680">
    <property type="entry name" value="WD40_rpt"/>
</dbReference>
<dbReference type="PANTHER" id="PTHR14927">
    <property type="entry name" value="NUCLEOLAR PROTEIN 10"/>
    <property type="match status" value="1"/>
</dbReference>
<dbReference type="PANTHER" id="PTHR14927:SF0">
    <property type="entry name" value="NUCLEOLAR PROTEIN 10"/>
    <property type="match status" value="1"/>
</dbReference>
<dbReference type="Pfam" id="PF23098">
    <property type="entry name" value="Beta-prop_NOL10_N"/>
    <property type="match status" value="1"/>
</dbReference>
<dbReference type="Pfam" id="PF23097">
    <property type="entry name" value="NOL10_2nd"/>
    <property type="match status" value="1"/>
</dbReference>
<dbReference type="Pfam" id="PF08159">
    <property type="entry name" value="NUC153"/>
    <property type="match status" value="1"/>
</dbReference>
<dbReference type="SMART" id="SM00320">
    <property type="entry name" value="WD40"/>
    <property type="match status" value="4"/>
</dbReference>
<dbReference type="SUPFAM" id="SSF50978">
    <property type="entry name" value="WD40 repeat-like"/>
    <property type="match status" value="1"/>
</dbReference>
<reference key="1">
    <citation type="submission" date="2004-03" db="EMBL/GenBank/DDBJ databases">
        <authorList>
            <consortium name="NIH - Xenopus Gene Collection (XGC) project"/>
        </authorList>
    </citation>
    <scope>NUCLEOTIDE SEQUENCE [LARGE SCALE MRNA]</scope>
    <source>
        <tissue>Embryo</tissue>
    </source>
</reference>
<organism>
    <name type="scientific">Xenopus tropicalis</name>
    <name type="common">Western clawed frog</name>
    <name type="synonym">Silurana tropicalis</name>
    <dbReference type="NCBI Taxonomy" id="8364"/>
    <lineage>
        <taxon>Eukaryota</taxon>
        <taxon>Metazoa</taxon>
        <taxon>Chordata</taxon>
        <taxon>Craniata</taxon>
        <taxon>Vertebrata</taxon>
        <taxon>Euteleostomi</taxon>
        <taxon>Amphibia</taxon>
        <taxon>Batrachia</taxon>
        <taxon>Anura</taxon>
        <taxon>Pipoidea</taxon>
        <taxon>Pipidae</taxon>
        <taxon>Xenopodinae</taxon>
        <taxon>Xenopus</taxon>
        <taxon>Silurana</taxon>
    </lineage>
</organism>
<accession>Q6NVM6</accession>
<feature type="chain" id="PRO_0000051106" description="Nucleolar protein 10">
    <location>
        <begin position="1"/>
        <end position="686"/>
    </location>
</feature>
<feature type="repeat" description="WD 1">
    <location>
        <begin position="50"/>
        <end position="90"/>
    </location>
</feature>
<feature type="repeat" description="WD 2">
    <location>
        <begin position="174"/>
        <end position="213"/>
    </location>
</feature>
<feature type="repeat" description="WD 3">
    <location>
        <begin position="228"/>
        <end position="266"/>
    </location>
</feature>
<feature type="repeat" description="WD 4">
    <location>
        <begin position="270"/>
        <end position="308"/>
    </location>
</feature>
<feature type="repeat" description="WD 5">
    <location>
        <begin position="310"/>
        <end position="349"/>
    </location>
</feature>
<feature type="region of interest" description="Disordered" evidence="3">
    <location>
        <begin position="526"/>
        <end position="590"/>
    </location>
</feature>
<feature type="region of interest" description="Disordered" evidence="3">
    <location>
        <begin position="649"/>
        <end position="686"/>
    </location>
</feature>
<feature type="coiled-coil region" evidence="2">
    <location>
        <begin position="420"/>
        <end position="470"/>
    </location>
</feature>
<feature type="coiled-coil region" evidence="2">
    <location>
        <begin position="555"/>
        <end position="587"/>
    </location>
</feature>
<feature type="coiled-coil region" evidence="2">
    <location>
        <begin position="639"/>
        <end position="676"/>
    </location>
</feature>
<feature type="compositionally biased region" description="Basic and acidic residues" evidence="3">
    <location>
        <begin position="551"/>
        <end position="582"/>
    </location>
</feature>
<feature type="compositionally biased region" description="Basic and acidic residues" evidence="3">
    <location>
        <begin position="655"/>
        <end position="666"/>
    </location>
</feature>
<feature type="compositionally biased region" description="Basic residues" evidence="3">
    <location>
        <begin position="667"/>
        <end position="686"/>
    </location>
</feature>
<proteinExistence type="evidence at transcript level"/>
<name>NOL10_XENTR</name>
<protein>
    <recommendedName>
        <fullName>Nucleolar protein 10</fullName>
    </recommendedName>
</protein>